<name>HSLO_STRZJ</name>
<proteinExistence type="inferred from homology"/>
<accession>C1CHI8</accession>
<feature type="chain" id="PRO_1000119268" description="33 kDa chaperonin">
    <location>
        <begin position="1"/>
        <end position="290"/>
    </location>
</feature>
<feature type="disulfide bond" description="Redox-active" evidence="1">
    <location>
        <begin position="235"/>
        <end position="237"/>
    </location>
</feature>
<feature type="disulfide bond" description="Redox-active" evidence="1">
    <location>
        <begin position="268"/>
        <end position="271"/>
    </location>
</feature>
<protein>
    <recommendedName>
        <fullName evidence="1">33 kDa chaperonin</fullName>
    </recommendedName>
    <alternativeName>
        <fullName evidence="1">Heat shock protein 33 homolog</fullName>
        <shortName evidence="1">HSP33</shortName>
    </alternativeName>
</protein>
<dbReference type="EMBL" id="CP000919">
    <property type="protein sequence ID" value="ACO18524.1"/>
    <property type="molecule type" value="Genomic_DNA"/>
</dbReference>
<dbReference type="RefSeq" id="WP_000357837.1">
    <property type="nucleotide sequence ID" value="NC_012466.1"/>
</dbReference>
<dbReference type="SMR" id="C1CHI8"/>
<dbReference type="KEGG" id="sjj:SPJ_2215"/>
<dbReference type="HOGENOM" id="CLU_054493_1_0_9"/>
<dbReference type="Proteomes" id="UP000002206">
    <property type="component" value="Chromosome"/>
</dbReference>
<dbReference type="GO" id="GO:0005737">
    <property type="term" value="C:cytoplasm"/>
    <property type="evidence" value="ECO:0007669"/>
    <property type="project" value="UniProtKB-SubCell"/>
</dbReference>
<dbReference type="GO" id="GO:0044183">
    <property type="term" value="F:protein folding chaperone"/>
    <property type="evidence" value="ECO:0007669"/>
    <property type="project" value="TreeGrafter"/>
</dbReference>
<dbReference type="GO" id="GO:0051082">
    <property type="term" value="F:unfolded protein binding"/>
    <property type="evidence" value="ECO:0007669"/>
    <property type="project" value="UniProtKB-UniRule"/>
</dbReference>
<dbReference type="GO" id="GO:0042026">
    <property type="term" value="P:protein refolding"/>
    <property type="evidence" value="ECO:0007669"/>
    <property type="project" value="TreeGrafter"/>
</dbReference>
<dbReference type="CDD" id="cd00498">
    <property type="entry name" value="Hsp33"/>
    <property type="match status" value="1"/>
</dbReference>
<dbReference type="Gene3D" id="3.55.30.10">
    <property type="entry name" value="Hsp33 domain"/>
    <property type="match status" value="1"/>
</dbReference>
<dbReference type="Gene3D" id="3.90.1280.10">
    <property type="entry name" value="HSP33 redox switch-like"/>
    <property type="match status" value="1"/>
</dbReference>
<dbReference type="HAMAP" id="MF_00117">
    <property type="entry name" value="HslO"/>
    <property type="match status" value="1"/>
</dbReference>
<dbReference type="InterPro" id="IPR000397">
    <property type="entry name" value="Heat_shock_Hsp33"/>
</dbReference>
<dbReference type="InterPro" id="IPR016154">
    <property type="entry name" value="Heat_shock_Hsp33_C"/>
</dbReference>
<dbReference type="InterPro" id="IPR016153">
    <property type="entry name" value="Heat_shock_Hsp33_N"/>
</dbReference>
<dbReference type="NCBIfam" id="NF001033">
    <property type="entry name" value="PRK00114.1"/>
    <property type="match status" value="1"/>
</dbReference>
<dbReference type="PANTHER" id="PTHR30111">
    <property type="entry name" value="33 KDA CHAPERONIN"/>
    <property type="match status" value="1"/>
</dbReference>
<dbReference type="PANTHER" id="PTHR30111:SF1">
    <property type="entry name" value="33 KDA CHAPERONIN"/>
    <property type="match status" value="1"/>
</dbReference>
<dbReference type="Pfam" id="PF01430">
    <property type="entry name" value="HSP33"/>
    <property type="match status" value="1"/>
</dbReference>
<dbReference type="PIRSF" id="PIRSF005261">
    <property type="entry name" value="Heat_shock_Hsp33"/>
    <property type="match status" value="1"/>
</dbReference>
<dbReference type="SUPFAM" id="SSF64397">
    <property type="entry name" value="Hsp33 domain"/>
    <property type="match status" value="1"/>
</dbReference>
<dbReference type="SUPFAM" id="SSF118352">
    <property type="entry name" value="HSP33 redox switch-like"/>
    <property type="match status" value="1"/>
</dbReference>
<sequence>MDKIIKTISESGAFRAFVLDSTETVRTAQEKHQTQASSTVALGRTLIASQILAANEKGNTKLTVKVLGSSSLGAIITVADTKGNVKGYVQNPGVDIKKTATGEVLVGPFVGNGQFLVITDYGAGNPYNSITPLISGEIGEDLAFYLTESQQTPSAVGLNVLLDEEDKVKVAGGFLVQVLPGAKKEEIARFEKRIQEMPAISTLLESDDHIEALLKAIYGDEAYKRLSEEEIRFQCDCSHERFMNALASLPSSDLQEMKEEDHGVEITCQFCQTTYNFDEKDLEELIRDKS</sequence>
<keyword id="KW-0143">Chaperone</keyword>
<keyword id="KW-0963">Cytoplasm</keyword>
<keyword id="KW-1015">Disulfide bond</keyword>
<keyword id="KW-0676">Redox-active center</keyword>
<keyword id="KW-0862">Zinc</keyword>
<reference key="1">
    <citation type="journal article" date="2010" name="Genome Biol.">
        <title>Structure and dynamics of the pan-genome of Streptococcus pneumoniae and closely related species.</title>
        <authorList>
            <person name="Donati C."/>
            <person name="Hiller N.L."/>
            <person name="Tettelin H."/>
            <person name="Muzzi A."/>
            <person name="Croucher N.J."/>
            <person name="Angiuoli S.V."/>
            <person name="Oggioni M."/>
            <person name="Dunning Hotopp J.C."/>
            <person name="Hu F.Z."/>
            <person name="Riley D.R."/>
            <person name="Covacci A."/>
            <person name="Mitchell T.J."/>
            <person name="Bentley S.D."/>
            <person name="Kilian M."/>
            <person name="Ehrlich G.D."/>
            <person name="Rappuoli R."/>
            <person name="Moxon E.R."/>
            <person name="Masignani V."/>
        </authorList>
    </citation>
    <scope>NUCLEOTIDE SEQUENCE [LARGE SCALE GENOMIC DNA]</scope>
    <source>
        <strain>JJA</strain>
    </source>
</reference>
<comment type="function">
    <text evidence="1">Redox regulated molecular chaperone. Protects both thermally unfolding and oxidatively damaged proteins from irreversible aggregation. Plays an important role in the bacterial defense system toward oxidative stress.</text>
</comment>
<comment type="subcellular location">
    <subcellularLocation>
        <location evidence="1">Cytoplasm</location>
    </subcellularLocation>
</comment>
<comment type="PTM">
    <text evidence="1">Under oxidizing conditions two disulfide bonds are formed involving the reactive cysteines. Under reducing conditions zinc is bound to the reactive cysteines and the protein is inactive.</text>
</comment>
<comment type="similarity">
    <text evidence="1">Belongs to the HSP33 family.</text>
</comment>
<evidence type="ECO:0000255" key="1">
    <source>
        <dbReference type="HAMAP-Rule" id="MF_00117"/>
    </source>
</evidence>
<organism>
    <name type="scientific">Streptococcus pneumoniae (strain JJA)</name>
    <dbReference type="NCBI Taxonomy" id="488222"/>
    <lineage>
        <taxon>Bacteria</taxon>
        <taxon>Bacillati</taxon>
        <taxon>Bacillota</taxon>
        <taxon>Bacilli</taxon>
        <taxon>Lactobacillales</taxon>
        <taxon>Streptococcaceae</taxon>
        <taxon>Streptococcus</taxon>
    </lineage>
</organism>
<gene>
    <name evidence="1" type="primary">hslO</name>
    <name type="ordered locus">SPJ_2215</name>
</gene>